<accession>P0A5S5</accession>
<accession>A0A1R3XU24</accession>
<accession>P71584</accession>
<accession>X2BDS6</accession>
<gene>
    <name type="primary">pknB</name>
    <name type="ordered locus">BQ2027_MB0014C</name>
</gene>
<protein>
    <recommendedName>
        <fullName>Serine/threonine-protein kinase PknB</fullName>
        <ecNumber>2.7.11.1</ecNumber>
    </recommendedName>
</protein>
<evidence type="ECO:0000250" key="1"/>
<evidence type="ECO:0000250" key="2">
    <source>
        <dbReference type="UniProtKB" id="P9WI81"/>
    </source>
</evidence>
<evidence type="ECO:0000255" key="3"/>
<evidence type="ECO:0000255" key="4">
    <source>
        <dbReference type="PROSITE-ProRule" id="PRU00159"/>
    </source>
</evidence>
<evidence type="ECO:0000255" key="5">
    <source>
        <dbReference type="PROSITE-ProRule" id="PRU00528"/>
    </source>
</evidence>
<evidence type="ECO:0000255" key="6">
    <source>
        <dbReference type="PROSITE-ProRule" id="PRU10027"/>
    </source>
</evidence>
<evidence type="ECO:0000256" key="7">
    <source>
        <dbReference type="SAM" id="MobiDB-lite"/>
    </source>
</evidence>
<feature type="chain" id="PRO_0000171206" description="Serine/threonine-protein kinase PknB">
    <location>
        <begin position="1"/>
        <end position="626"/>
    </location>
</feature>
<feature type="topological domain" description="Cytoplasmic" evidence="3">
    <location>
        <begin position="1"/>
        <end position="332"/>
    </location>
</feature>
<feature type="transmembrane region" description="Helical" evidence="3">
    <location>
        <begin position="333"/>
        <end position="353"/>
    </location>
</feature>
<feature type="topological domain" description="Extracellular" evidence="3">
    <location>
        <begin position="354"/>
        <end position="626"/>
    </location>
</feature>
<feature type="domain" description="Protein kinase" evidence="4">
    <location>
        <begin position="11"/>
        <end position="274"/>
    </location>
</feature>
<feature type="domain" description="PASTA 1" evidence="5">
    <location>
        <begin position="356"/>
        <end position="422"/>
    </location>
</feature>
<feature type="domain" description="PASTA 2" evidence="5">
    <location>
        <begin position="423"/>
        <end position="490"/>
    </location>
</feature>
<feature type="domain" description="PASTA 3" evidence="5">
    <location>
        <begin position="491"/>
        <end position="557"/>
    </location>
</feature>
<feature type="domain" description="PASTA 4" evidence="5">
    <location>
        <begin position="558"/>
        <end position="626"/>
    </location>
</feature>
<feature type="region of interest" description="Disordered" evidence="7">
    <location>
        <begin position="299"/>
        <end position="323"/>
    </location>
</feature>
<feature type="compositionally biased region" description="Basic and acidic residues" evidence="7">
    <location>
        <begin position="311"/>
        <end position="323"/>
    </location>
</feature>
<feature type="active site" description="Proton acceptor" evidence="4 6">
    <location>
        <position position="138"/>
    </location>
</feature>
<feature type="binding site" evidence="4">
    <location>
        <begin position="17"/>
        <end position="25"/>
    </location>
    <ligand>
        <name>ATP</name>
        <dbReference type="ChEBI" id="CHEBI:30616"/>
    </ligand>
</feature>
<feature type="binding site" evidence="4">
    <location>
        <position position="40"/>
    </location>
    <ligand>
        <name>ATP</name>
        <dbReference type="ChEBI" id="CHEBI:30616"/>
    </ligand>
</feature>
<feature type="binding site" evidence="4">
    <location>
        <begin position="93"/>
        <end position="95"/>
    </location>
    <ligand>
        <name>ATP</name>
        <dbReference type="ChEBI" id="CHEBI:30616"/>
    </ligand>
</feature>
<feature type="binding site" evidence="4">
    <location>
        <begin position="140"/>
        <end position="143"/>
    </location>
    <ligand>
        <name>ATP</name>
        <dbReference type="ChEBI" id="CHEBI:30616"/>
    </ligand>
</feature>
<feature type="binding site" evidence="1">
    <location>
        <position position="143"/>
    </location>
    <ligand>
        <name>Mg(2+)</name>
        <dbReference type="ChEBI" id="CHEBI:18420"/>
    </ligand>
</feature>
<feature type="binding site" evidence="4">
    <location>
        <position position="156"/>
    </location>
    <ligand>
        <name>ATP</name>
        <dbReference type="ChEBI" id="CHEBI:30616"/>
    </ligand>
</feature>
<feature type="binding site" evidence="1">
    <location>
        <position position="156"/>
    </location>
    <ligand>
        <name>Mg(2+)</name>
        <dbReference type="ChEBI" id="CHEBI:18420"/>
    </ligand>
</feature>
<feature type="modified residue" description="Phosphoserine; by autocatalysis" evidence="1">
    <location>
        <position position="166"/>
    </location>
</feature>
<feature type="modified residue" description="Phosphoserine; by autocatalysis" evidence="1">
    <location>
        <position position="169"/>
    </location>
</feature>
<feature type="modified residue" description="Phosphothreonine; by autocatalysis" evidence="1">
    <location>
        <position position="171"/>
    </location>
</feature>
<feature type="modified residue" description="Phosphothreonine; by autocatalysis" evidence="1">
    <location>
        <position position="173"/>
    </location>
</feature>
<feature type="modified residue" description="Phosphothreonine; by autocatalysis" evidence="1">
    <location>
        <position position="294"/>
    </location>
</feature>
<feature type="modified residue" description="Phosphoserine; by autocatalysis" evidence="1">
    <location>
        <position position="295"/>
    </location>
</feature>
<feature type="modified residue" description="Phosphothreonine; by autocatalysis" evidence="1">
    <location>
        <position position="309"/>
    </location>
</feature>
<comment type="function">
    <text evidence="2">Protein kinase that regulates many aspects of mycobacterial physiology. Is a key component of a signal transduction pathway that regulates cell growth, cell shape and cell division via phosphorylation of target proteins.</text>
</comment>
<comment type="catalytic activity">
    <reaction>
        <text>L-seryl-[protein] + ATP = O-phospho-L-seryl-[protein] + ADP + H(+)</text>
        <dbReference type="Rhea" id="RHEA:17989"/>
        <dbReference type="Rhea" id="RHEA-COMP:9863"/>
        <dbReference type="Rhea" id="RHEA-COMP:11604"/>
        <dbReference type="ChEBI" id="CHEBI:15378"/>
        <dbReference type="ChEBI" id="CHEBI:29999"/>
        <dbReference type="ChEBI" id="CHEBI:30616"/>
        <dbReference type="ChEBI" id="CHEBI:83421"/>
        <dbReference type="ChEBI" id="CHEBI:456216"/>
        <dbReference type="EC" id="2.7.11.1"/>
    </reaction>
</comment>
<comment type="catalytic activity">
    <reaction>
        <text>L-threonyl-[protein] + ATP = O-phospho-L-threonyl-[protein] + ADP + H(+)</text>
        <dbReference type="Rhea" id="RHEA:46608"/>
        <dbReference type="Rhea" id="RHEA-COMP:11060"/>
        <dbReference type="Rhea" id="RHEA-COMP:11605"/>
        <dbReference type="ChEBI" id="CHEBI:15378"/>
        <dbReference type="ChEBI" id="CHEBI:30013"/>
        <dbReference type="ChEBI" id="CHEBI:30616"/>
        <dbReference type="ChEBI" id="CHEBI:61977"/>
        <dbReference type="ChEBI" id="CHEBI:456216"/>
        <dbReference type="EC" id="2.7.11.1"/>
    </reaction>
</comment>
<comment type="subunit">
    <text evidence="1">Homodimer.</text>
</comment>
<comment type="subcellular location">
    <subcellularLocation>
        <location evidence="1">Cell membrane</location>
        <topology evidence="1">Single-pass membrane protein</topology>
    </subcellularLocation>
</comment>
<comment type="PTM">
    <text evidence="1">Autophosphorylated. Dephosphorylated by PstP (By similarity).</text>
</comment>
<comment type="similarity">
    <text evidence="4">Belongs to the protein kinase superfamily. Ser/Thr protein kinase family.</text>
</comment>
<keyword id="KW-0067">ATP-binding</keyword>
<keyword id="KW-1003">Cell membrane</keyword>
<keyword id="KW-0418">Kinase</keyword>
<keyword id="KW-0460">Magnesium</keyword>
<keyword id="KW-0472">Membrane</keyword>
<keyword id="KW-0479">Metal-binding</keyword>
<keyword id="KW-0547">Nucleotide-binding</keyword>
<keyword id="KW-0597">Phosphoprotein</keyword>
<keyword id="KW-1185">Reference proteome</keyword>
<keyword id="KW-0677">Repeat</keyword>
<keyword id="KW-0723">Serine/threonine-protein kinase</keyword>
<keyword id="KW-0808">Transferase</keyword>
<keyword id="KW-0812">Transmembrane</keyword>
<keyword id="KW-1133">Transmembrane helix</keyword>
<name>PKNB_MYCBO</name>
<proteinExistence type="inferred from homology"/>
<organism>
    <name type="scientific">Mycobacterium bovis (strain ATCC BAA-935 / AF2122/97)</name>
    <dbReference type="NCBI Taxonomy" id="233413"/>
    <lineage>
        <taxon>Bacteria</taxon>
        <taxon>Bacillati</taxon>
        <taxon>Actinomycetota</taxon>
        <taxon>Actinomycetes</taxon>
        <taxon>Mycobacteriales</taxon>
        <taxon>Mycobacteriaceae</taxon>
        <taxon>Mycobacterium</taxon>
        <taxon>Mycobacterium tuberculosis complex</taxon>
    </lineage>
</organism>
<reference key="1">
    <citation type="journal article" date="2003" name="Proc. Natl. Acad. Sci. U.S.A.">
        <title>The complete genome sequence of Mycobacterium bovis.</title>
        <authorList>
            <person name="Garnier T."/>
            <person name="Eiglmeier K."/>
            <person name="Camus J.-C."/>
            <person name="Medina N."/>
            <person name="Mansoor H."/>
            <person name="Pryor M."/>
            <person name="Duthoy S."/>
            <person name="Grondin S."/>
            <person name="Lacroix C."/>
            <person name="Monsempe C."/>
            <person name="Simon S."/>
            <person name="Harris B."/>
            <person name="Atkin R."/>
            <person name="Doggett J."/>
            <person name="Mayes R."/>
            <person name="Keating L."/>
            <person name="Wheeler P.R."/>
            <person name="Parkhill J."/>
            <person name="Barrell B.G."/>
            <person name="Cole S.T."/>
            <person name="Gordon S.V."/>
            <person name="Hewinson R.G."/>
        </authorList>
    </citation>
    <scope>NUCLEOTIDE SEQUENCE [LARGE SCALE GENOMIC DNA]</scope>
    <source>
        <strain>ATCC BAA-935 / AF2122/97</strain>
    </source>
</reference>
<reference key="2">
    <citation type="journal article" date="2017" name="Genome Announc.">
        <title>Updated reference genome sequence and annotation of Mycobacterium bovis AF2122/97.</title>
        <authorList>
            <person name="Malone K.M."/>
            <person name="Farrell D."/>
            <person name="Stuber T.P."/>
            <person name="Schubert O.T."/>
            <person name="Aebersold R."/>
            <person name="Robbe-Austerman S."/>
            <person name="Gordon S.V."/>
        </authorList>
    </citation>
    <scope>NUCLEOTIDE SEQUENCE [LARGE SCALE GENOMIC DNA]</scope>
    <scope>GENOME REANNOTATION</scope>
    <source>
        <strain>ATCC BAA-935 / AF2122/97</strain>
    </source>
</reference>
<dbReference type="EC" id="2.7.11.1"/>
<dbReference type="EMBL" id="LT708304">
    <property type="protein sequence ID" value="SIT98359.1"/>
    <property type="molecule type" value="Genomic_DNA"/>
</dbReference>
<dbReference type="RefSeq" id="NP_853684.1">
    <property type="nucleotide sequence ID" value="NC_002945.3"/>
</dbReference>
<dbReference type="RefSeq" id="WP_003400356.1">
    <property type="nucleotide sequence ID" value="NC_002945.4"/>
</dbReference>
<dbReference type="SMR" id="P0A5S5"/>
<dbReference type="GeneID" id="45423973"/>
<dbReference type="KEGG" id="mbo:BQ2027_MB0014C"/>
<dbReference type="PATRIC" id="fig|233413.5.peg.18"/>
<dbReference type="Proteomes" id="UP000001419">
    <property type="component" value="Chromosome"/>
</dbReference>
<dbReference type="GO" id="GO:0005886">
    <property type="term" value="C:plasma membrane"/>
    <property type="evidence" value="ECO:0007669"/>
    <property type="project" value="UniProtKB-SubCell"/>
</dbReference>
<dbReference type="GO" id="GO:0005524">
    <property type="term" value="F:ATP binding"/>
    <property type="evidence" value="ECO:0007669"/>
    <property type="project" value="UniProtKB-KW"/>
</dbReference>
<dbReference type="GO" id="GO:0046872">
    <property type="term" value="F:metal ion binding"/>
    <property type="evidence" value="ECO:0007669"/>
    <property type="project" value="UniProtKB-KW"/>
</dbReference>
<dbReference type="GO" id="GO:0106310">
    <property type="term" value="F:protein serine kinase activity"/>
    <property type="evidence" value="ECO:0007669"/>
    <property type="project" value="RHEA"/>
</dbReference>
<dbReference type="GO" id="GO:0004674">
    <property type="term" value="F:protein serine/threonine kinase activity"/>
    <property type="evidence" value="ECO:0007669"/>
    <property type="project" value="UniProtKB-KW"/>
</dbReference>
<dbReference type="GO" id="GO:0080090">
    <property type="term" value="P:regulation of primary metabolic process"/>
    <property type="evidence" value="ECO:0007669"/>
    <property type="project" value="UniProtKB-ARBA"/>
</dbReference>
<dbReference type="CDD" id="cd06577">
    <property type="entry name" value="PASTA_pknB"/>
    <property type="match status" value="4"/>
</dbReference>
<dbReference type="CDD" id="cd14014">
    <property type="entry name" value="STKc_PknB_like"/>
    <property type="match status" value="1"/>
</dbReference>
<dbReference type="FunFam" id="1.10.510.10:FF:000021">
    <property type="entry name" value="Serine/threonine protein kinase"/>
    <property type="match status" value="1"/>
</dbReference>
<dbReference type="FunFam" id="3.30.200.20:FF:000035">
    <property type="entry name" value="Serine/threonine protein kinase Stk1"/>
    <property type="match status" value="1"/>
</dbReference>
<dbReference type="Gene3D" id="3.30.10.20">
    <property type="match status" value="4"/>
</dbReference>
<dbReference type="Gene3D" id="3.30.200.20">
    <property type="entry name" value="Phosphorylase Kinase, domain 1"/>
    <property type="match status" value="1"/>
</dbReference>
<dbReference type="Gene3D" id="1.10.510.10">
    <property type="entry name" value="Transferase(Phosphotransferase) domain 1"/>
    <property type="match status" value="1"/>
</dbReference>
<dbReference type="InterPro" id="IPR011009">
    <property type="entry name" value="Kinase-like_dom_sf"/>
</dbReference>
<dbReference type="InterPro" id="IPR005543">
    <property type="entry name" value="PASTA_dom"/>
</dbReference>
<dbReference type="InterPro" id="IPR000719">
    <property type="entry name" value="Prot_kinase_dom"/>
</dbReference>
<dbReference type="InterPro" id="IPR017441">
    <property type="entry name" value="Protein_kinase_ATP_BS"/>
</dbReference>
<dbReference type="InterPro" id="IPR008271">
    <property type="entry name" value="Ser/Thr_kinase_AS"/>
</dbReference>
<dbReference type="NCBIfam" id="NF033483">
    <property type="entry name" value="PknB_PASTA_kin"/>
    <property type="match status" value="1"/>
</dbReference>
<dbReference type="PANTHER" id="PTHR43289">
    <property type="entry name" value="MITOGEN-ACTIVATED PROTEIN KINASE KINASE KINASE 20-RELATED"/>
    <property type="match status" value="1"/>
</dbReference>
<dbReference type="PANTHER" id="PTHR43289:SF6">
    <property type="entry name" value="SERINE_THREONINE-PROTEIN KINASE NEKL-3"/>
    <property type="match status" value="1"/>
</dbReference>
<dbReference type="Pfam" id="PF03793">
    <property type="entry name" value="PASTA"/>
    <property type="match status" value="4"/>
</dbReference>
<dbReference type="Pfam" id="PF00069">
    <property type="entry name" value="Pkinase"/>
    <property type="match status" value="1"/>
</dbReference>
<dbReference type="SMART" id="SM00740">
    <property type="entry name" value="PASTA"/>
    <property type="match status" value="4"/>
</dbReference>
<dbReference type="SMART" id="SM00220">
    <property type="entry name" value="S_TKc"/>
    <property type="match status" value="1"/>
</dbReference>
<dbReference type="SUPFAM" id="SSF56112">
    <property type="entry name" value="Protein kinase-like (PK-like)"/>
    <property type="match status" value="1"/>
</dbReference>
<dbReference type="PROSITE" id="PS51178">
    <property type="entry name" value="PASTA"/>
    <property type="match status" value="4"/>
</dbReference>
<dbReference type="PROSITE" id="PS00107">
    <property type="entry name" value="PROTEIN_KINASE_ATP"/>
    <property type="match status" value="1"/>
</dbReference>
<dbReference type="PROSITE" id="PS50011">
    <property type="entry name" value="PROTEIN_KINASE_DOM"/>
    <property type="match status" value="1"/>
</dbReference>
<dbReference type="PROSITE" id="PS00108">
    <property type="entry name" value="PROTEIN_KINASE_ST"/>
    <property type="match status" value="1"/>
</dbReference>
<sequence length="626" mass="66510">MTTPSHLSDRYELGEILGFGGMSEVHLARDLRLHRDVAVKVLRADLARDPSFYLRFRREAQNAAALNHPAIVAVYDTGEAETPAGPLPYIVMEYVDGVTLRDIVHTEGPMTPKRAIEVIADACQALNFSHQNGIIHRDVKPANIMISATNAVKVMDFGIARAIADSGNSVTQTAAVIGTAQYLSPEQARGDSVDARSDVYSLGCVLYEVLTGEPPFTGDSPVSVAYQHVREDPIPPSARHEGLSADLDAVVLKALAKNPENRYQTAAEMRADLVRVHNGEPPEAPKVLTDAERTSLLSSAAGNLSGPRTDPLPRQDLDDTDRDRSIGSVGRWVAVVAVLAVLTVVVTIAINTFGGITRDVQVPDVRGQSSADAIATLQNRGFKIRTLQKPDSTIPPDHVIGTDPAANTSVSAGDEITVNVSTGPEQREIPDVSTLTYAEAVKKLTAAGFGRFKQANSPSTPELVGKVIGTNPPANQTSAITNVVIIIVGSGPATKDIPDVAGQTVDVAQKNLNVYGFTKFSQASVDSPRPAGEVTGTNPPAGTTVPVDSVIELQVSKGNQFVMPDLSGMFWVDAEPRLRALGWTGMLDKGADVDAGGSQHNRVVYQNPPAGTGVNRDGIITLRFGQ</sequence>